<accession>A6ZS83</accession>
<comment type="function">
    <text evidence="1">Negative regulatory component of the MBF complex involved in cell-cycle-dependent transcription.</text>
</comment>
<comment type="subunit">
    <text evidence="1">The MBF complex is composed of at least SWI6, MBP1 and NRM1.</text>
</comment>
<comment type="subcellular location">
    <subcellularLocation>
        <location evidence="1">Cytoplasm</location>
    </subcellularLocation>
    <subcellularLocation>
        <location evidence="1">Nucleus</location>
    </subcellularLocation>
</comment>
<comment type="induction">
    <text evidence="1">During G1 phase of the cell cycle.</text>
</comment>
<comment type="similarity">
    <text evidence="4">Belongs to the WHI5/NRM1 family.</text>
</comment>
<organism>
    <name type="scientific">Saccharomyces cerevisiae (strain YJM789)</name>
    <name type="common">Baker's yeast</name>
    <dbReference type="NCBI Taxonomy" id="307796"/>
    <lineage>
        <taxon>Eukaryota</taxon>
        <taxon>Fungi</taxon>
        <taxon>Dikarya</taxon>
        <taxon>Ascomycota</taxon>
        <taxon>Saccharomycotina</taxon>
        <taxon>Saccharomycetes</taxon>
        <taxon>Saccharomycetales</taxon>
        <taxon>Saccharomycetaceae</taxon>
        <taxon>Saccharomyces</taxon>
    </lineage>
</organism>
<name>NRM1_YEAS7</name>
<sequence length="249" mass="27564">MSIMKQRLPLGEFSSSKINKLAIANIADASEPRNHGENNVGTVCLPSIKSLMVSPEVYENTKSLPVPLMRSSGGGMACASKSSCQDGISTKTTSRDYSELSKKLQIRLQFAYYKYKTKQTDKNFTDLKSKHSITRPSKVATHSKSEPLTRRRKLVLSQGHYKTPARSKIKTPSSICSHDNTSSFTSFRGVSESSSTTADMNVADTTTPIRNNINTKHSNSHNRTLYQRQETPTSIKAAKSLIHLFTSNQ</sequence>
<dbReference type="EMBL" id="AAFW02000067">
    <property type="protein sequence ID" value="EDN62815.1"/>
    <property type="molecule type" value="Genomic_DNA"/>
</dbReference>
<dbReference type="SMR" id="A6ZS83"/>
<dbReference type="HOGENOM" id="CLU_098759_0_0_1"/>
<dbReference type="Proteomes" id="UP000007060">
    <property type="component" value="Unassembled WGS sequence"/>
</dbReference>
<dbReference type="GO" id="GO:0005737">
    <property type="term" value="C:cytoplasm"/>
    <property type="evidence" value="ECO:0007669"/>
    <property type="project" value="UniProtKB-SubCell"/>
</dbReference>
<dbReference type="GO" id="GO:0005634">
    <property type="term" value="C:nucleus"/>
    <property type="evidence" value="ECO:0007669"/>
    <property type="project" value="UniProtKB-SubCell"/>
</dbReference>
<dbReference type="InterPro" id="IPR013734">
    <property type="entry name" value="TF_Nrm1/Whi5"/>
</dbReference>
<dbReference type="Pfam" id="PF08528">
    <property type="entry name" value="Whi5"/>
    <property type="match status" value="1"/>
</dbReference>
<protein>
    <recommendedName>
        <fullName>Transcription factor NRM1</fullName>
    </recommendedName>
    <alternativeName>
        <fullName>Negative regulator of MBF targets 1</fullName>
    </alternativeName>
</protein>
<gene>
    <name type="primary">NRM1</name>
    <name type="ORF">SCY_4794</name>
</gene>
<evidence type="ECO:0000250" key="1"/>
<evidence type="ECO:0000250" key="2">
    <source>
        <dbReference type="UniProtKB" id="P53718"/>
    </source>
</evidence>
<evidence type="ECO:0000256" key="3">
    <source>
        <dbReference type="SAM" id="MobiDB-lite"/>
    </source>
</evidence>
<evidence type="ECO:0000305" key="4"/>
<keyword id="KW-0963">Cytoplasm</keyword>
<keyword id="KW-0539">Nucleus</keyword>
<keyword id="KW-0597">Phosphoprotein</keyword>
<keyword id="KW-0678">Repressor</keyword>
<keyword id="KW-0804">Transcription</keyword>
<keyword id="KW-0805">Transcription regulation</keyword>
<reference key="1">
    <citation type="journal article" date="2007" name="Proc. Natl. Acad. Sci. U.S.A.">
        <title>Genome sequencing and comparative analysis of Saccharomyces cerevisiae strain YJM789.</title>
        <authorList>
            <person name="Wei W."/>
            <person name="McCusker J.H."/>
            <person name="Hyman R.W."/>
            <person name="Jones T."/>
            <person name="Ning Y."/>
            <person name="Cao Z."/>
            <person name="Gu Z."/>
            <person name="Bruno D."/>
            <person name="Miranda M."/>
            <person name="Nguyen M."/>
            <person name="Wilhelmy J."/>
            <person name="Komp C."/>
            <person name="Tamse R."/>
            <person name="Wang X."/>
            <person name="Jia P."/>
            <person name="Luedi P."/>
            <person name="Oefner P.J."/>
            <person name="David L."/>
            <person name="Dietrich F.S."/>
            <person name="Li Y."/>
            <person name="Davis R.W."/>
            <person name="Steinmetz L.M."/>
        </authorList>
    </citation>
    <scope>NUCLEOTIDE SEQUENCE [LARGE SCALE GENOMIC DNA]</scope>
    <source>
        <strain>YJM789</strain>
    </source>
</reference>
<proteinExistence type="inferred from homology"/>
<feature type="chain" id="PRO_0000320394" description="Transcription factor NRM1">
    <location>
        <begin position="1"/>
        <end position="249"/>
    </location>
</feature>
<feature type="region of interest" description="Disordered" evidence="3">
    <location>
        <begin position="208"/>
        <end position="230"/>
    </location>
</feature>
<feature type="modified residue" description="Phosphoserine" evidence="2">
    <location>
        <position position="145"/>
    </location>
</feature>